<protein>
    <recommendedName>
        <fullName>Probable acid phosphatase DDB_G0284755</fullName>
        <ecNumber>3.1.3.2</ecNumber>
    </recommendedName>
</protein>
<feature type="chain" id="PRO_0000369255" description="Probable acid phosphatase DDB_G0284755">
    <location>
        <begin position="1"/>
        <end position="473"/>
    </location>
</feature>
<feature type="active site" description="Nucleophile" evidence="1">
    <location>
        <position position="94"/>
    </location>
</feature>
<feature type="active site" description="Proton donor" evidence="1">
    <location>
        <position position="359"/>
    </location>
</feature>
<proteinExistence type="inferred from homology"/>
<accession>Q54P71</accession>
<keyword id="KW-0378">Hydrolase</keyword>
<keyword id="KW-1185">Reference proteome</keyword>
<name>Y4755_DICDI</name>
<evidence type="ECO:0000250" key="1"/>
<evidence type="ECO:0000305" key="2"/>
<gene>
    <name type="ORF">DDB_G0284755</name>
</gene>
<reference key="1">
    <citation type="journal article" date="2005" name="Nature">
        <title>The genome of the social amoeba Dictyostelium discoideum.</title>
        <authorList>
            <person name="Eichinger L."/>
            <person name="Pachebat J.A."/>
            <person name="Gloeckner G."/>
            <person name="Rajandream M.A."/>
            <person name="Sucgang R."/>
            <person name="Berriman M."/>
            <person name="Song J."/>
            <person name="Olsen R."/>
            <person name="Szafranski K."/>
            <person name="Xu Q."/>
            <person name="Tunggal B."/>
            <person name="Kummerfeld S."/>
            <person name="Madera M."/>
            <person name="Konfortov B.A."/>
            <person name="Rivero F."/>
            <person name="Bankier A.T."/>
            <person name="Lehmann R."/>
            <person name="Hamlin N."/>
            <person name="Davies R."/>
            <person name="Gaudet P."/>
            <person name="Fey P."/>
            <person name="Pilcher K."/>
            <person name="Chen G."/>
            <person name="Saunders D."/>
            <person name="Sodergren E.J."/>
            <person name="Davis P."/>
            <person name="Kerhornou A."/>
            <person name="Nie X."/>
            <person name="Hall N."/>
            <person name="Anjard C."/>
            <person name="Hemphill L."/>
            <person name="Bason N."/>
            <person name="Farbrother P."/>
            <person name="Desany B."/>
            <person name="Just E."/>
            <person name="Morio T."/>
            <person name="Rost R."/>
            <person name="Churcher C.M."/>
            <person name="Cooper J."/>
            <person name="Haydock S."/>
            <person name="van Driessche N."/>
            <person name="Cronin A."/>
            <person name="Goodhead I."/>
            <person name="Muzny D.M."/>
            <person name="Mourier T."/>
            <person name="Pain A."/>
            <person name="Lu M."/>
            <person name="Harper D."/>
            <person name="Lindsay R."/>
            <person name="Hauser H."/>
            <person name="James K.D."/>
            <person name="Quiles M."/>
            <person name="Madan Babu M."/>
            <person name="Saito T."/>
            <person name="Buchrieser C."/>
            <person name="Wardroper A."/>
            <person name="Felder M."/>
            <person name="Thangavelu M."/>
            <person name="Johnson D."/>
            <person name="Knights A."/>
            <person name="Loulseged H."/>
            <person name="Mungall K.L."/>
            <person name="Oliver K."/>
            <person name="Price C."/>
            <person name="Quail M.A."/>
            <person name="Urushihara H."/>
            <person name="Hernandez J."/>
            <person name="Rabbinowitsch E."/>
            <person name="Steffen D."/>
            <person name="Sanders M."/>
            <person name="Ma J."/>
            <person name="Kohara Y."/>
            <person name="Sharp S."/>
            <person name="Simmonds M.N."/>
            <person name="Spiegler S."/>
            <person name="Tivey A."/>
            <person name="Sugano S."/>
            <person name="White B."/>
            <person name="Walker D."/>
            <person name="Woodward J.R."/>
            <person name="Winckler T."/>
            <person name="Tanaka Y."/>
            <person name="Shaulsky G."/>
            <person name="Schleicher M."/>
            <person name="Weinstock G.M."/>
            <person name="Rosenthal A."/>
            <person name="Cox E.C."/>
            <person name="Chisholm R.L."/>
            <person name="Gibbs R.A."/>
            <person name="Loomis W.F."/>
            <person name="Platzer M."/>
            <person name="Kay R.R."/>
            <person name="Williams J.G."/>
            <person name="Dear P.H."/>
            <person name="Noegel A.A."/>
            <person name="Barrell B.G."/>
            <person name="Kuspa A."/>
        </authorList>
    </citation>
    <scope>NUCLEOTIDE SEQUENCE [LARGE SCALE GENOMIC DNA]</scope>
    <source>
        <strain>AX4</strain>
    </source>
</reference>
<sequence length="473" mass="54859">MIINFLLNSIVGTVKLDENPNINLKNNINNNDNNKENSIEINDYLQTLVKEEDFKNQHTDPNFKFLALRSTKVPIDEYNPENYQLKFVQIITRHGRRTPESKRYPLTMWTCNSLDQLITNKDTSRPDCNMGQLTVLGIVDQINVGKAYRNLFINNLHFLDNKYNKDQIFIRSSNRERTISSARSFMHGLYGGSFADDQEKSPNHSSFLILDEKDENMYPRSSPKYNFLKGLLKKHKAVIEENEKSNLKEFTEKIKNIFEDSKFDTAFYVPSWRSYAGLVNSFDCFRNNGLPLPKGFTNDVIQRMYEESAKEFKSARLFPEMSILGIGRFVNDLTKQMYLKSVNDPSVKDLKLSLYSGHDTTLAALLVAYDMYEDNVHPVTSSALEYLLFQDKNYKEPEVVTKSNEKELINHQYVKVIFNHKPIHIGPCKDKEVDGMCPLSEFLKISQSIIPTNYDEQSKITDEEKNKYIQEST</sequence>
<comment type="catalytic activity">
    <reaction>
        <text>a phosphate monoester + H2O = an alcohol + phosphate</text>
        <dbReference type="Rhea" id="RHEA:15017"/>
        <dbReference type="ChEBI" id="CHEBI:15377"/>
        <dbReference type="ChEBI" id="CHEBI:30879"/>
        <dbReference type="ChEBI" id="CHEBI:43474"/>
        <dbReference type="ChEBI" id="CHEBI:67140"/>
        <dbReference type="EC" id="3.1.3.2"/>
    </reaction>
</comment>
<comment type="similarity">
    <text evidence="2">Belongs to the histidine acid phosphatase family.</text>
</comment>
<dbReference type="EC" id="3.1.3.2"/>
<dbReference type="EMBL" id="AAFI02000071">
    <property type="protein sequence ID" value="EAL65030.2"/>
    <property type="molecule type" value="Genomic_DNA"/>
</dbReference>
<dbReference type="RefSeq" id="XP_638387.2">
    <property type="nucleotide sequence ID" value="XM_633295.2"/>
</dbReference>
<dbReference type="SMR" id="Q54P71"/>
<dbReference type="FunCoup" id="Q54P71">
    <property type="interactions" value="9"/>
</dbReference>
<dbReference type="STRING" id="44689.Q54P71"/>
<dbReference type="PaxDb" id="44689-DDB0302470"/>
<dbReference type="EnsemblProtists" id="EAL65030">
    <property type="protein sequence ID" value="EAL65030"/>
    <property type="gene ID" value="DDB_G0284755"/>
</dbReference>
<dbReference type="GeneID" id="8624756"/>
<dbReference type="KEGG" id="ddi:DDB_G0284755"/>
<dbReference type="dictyBase" id="DDB_G0284755"/>
<dbReference type="VEuPathDB" id="AmoebaDB:DDB_G0284755"/>
<dbReference type="eggNOG" id="KOG3720">
    <property type="taxonomic scope" value="Eukaryota"/>
</dbReference>
<dbReference type="HOGENOM" id="CLU_030431_5_0_1"/>
<dbReference type="InParanoid" id="Q54P71"/>
<dbReference type="OMA" id="SWPPFTS"/>
<dbReference type="PhylomeDB" id="Q54P71"/>
<dbReference type="Reactome" id="R-DDI-1483166">
    <property type="pathway name" value="Synthesis of PA"/>
</dbReference>
<dbReference type="Reactome" id="R-DDI-6798695">
    <property type="pathway name" value="Neutrophil degranulation"/>
</dbReference>
<dbReference type="PRO" id="PR:Q54P71"/>
<dbReference type="Proteomes" id="UP000002195">
    <property type="component" value="Chromosome 4"/>
</dbReference>
<dbReference type="GO" id="GO:0003993">
    <property type="term" value="F:acid phosphatase activity"/>
    <property type="evidence" value="ECO:0007669"/>
    <property type="project" value="UniProtKB-EC"/>
</dbReference>
<dbReference type="GO" id="GO:0016791">
    <property type="term" value="F:phosphatase activity"/>
    <property type="evidence" value="ECO:0000318"/>
    <property type="project" value="GO_Central"/>
</dbReference>
<dbReference type="CDD" id="cd07061">
    <property type="entry name" value="HP_HAP_like"/>
    <property type="match status" value="1"/>
</dbReference>
<dbReference type="Gene3D" id="3.40.50.1240">
    <property type="entry name" value="Phosphoglycerate mutase-like"/>
    <property type="match status" value="1"/>
</dbReference>
<dbReference type="InterPro" id="IPR033379">
    <property type="entry name" value="Acid_Pase_AS"/>
</dbReference>
<dbReference type="InterPro" id="IPR000560">
    <property type="entry name" value="His_Pase_clade-2"/>
</dbReference>
<dbReference type="InterPro" id="IPR029033">
    <property type="entry name" value="His_PPase_superfam"/>
</dbReference>
<dbReference type="InterPro" id="IPR050645">
    <property type="entry name" value="Histidine_acid_phosphatase"/>
</dbReference>
<dbReference type="PANTHER" id="PTHR11567:SF110">
    <property type="entry name" value="2-PHOSPHOXYLOSE PHOSPHATASE 1"/>
    <property type="match status" value="1"/>
</dbReference>
<dbReference type="PANTHER" id="PTHR11567">
    <property type="entry name" value="ACID PHOSPHATASE-RELATED"/>
    <property type="match status" value="1"/>
</dbReference>
<dbReference type="Pfam" id="PF00328">
    <property type="entry name" value="His_Phos_2"/>
    <property type="match status" value="1"/>
</dbReference>
<dbReference type="SUPFAM" id="SSF53254">
    <property type="entry name" value="Phosphoglycerate mutase-like"/>
    <property type="match status" value="1"/>
</dbReference>
<dbReference type="PROSITE" id="PS00616">
    <property type="entry name" value="HIS_ACID_PHOSPHAT_1"/>
    <property type="match status" value="1"/>
</dbReference>
<dbReference type="PROSITE" id="PS00778">
    <property type="entry name" value="HIS_ACID_PHOSPHAT_2"/>
    <property type="match status" value="1"/>
</dbReference>
<organism>
    <name type="scientific">Dictyostelium discoideum</name>
    <name type="common">Social amoeba</name>
    <dbReference type="NCBI Taxonomy" id="44689"/>
    <lineage>
        <taxon>Eukaryota</taxon>
        <taxon>Amoebozoa</taxon>
        <taxon>Evosea</taxon>
        <taxon>Eumycetozoa</taxon>
        <taxon>Dictyostelia</taxon>
        <taxon>Dictyosteliales</taxon>
        <taxon>Dictyosteliaceae</taxon>
        <taxon>Dictyostelium</taxon>
    </lineage>
</organism>